<proteinExistence type="inferred from homology"/>
<organism>
    <name type="scientific">Crucihimalaya wallichii</name>
    <name type="common">Rock-cress</name>
    <name type="synonym">Arabidopsis campestris</name>
    <dbReference type="NCBI Taxonomy" id="78192"/>
    <lineage>
        <taxon>Eukaryota</taxon>
        <taxon>Viridiplantae</taxon>
        <taxon>Streptophyta</taxon>
        <taxon>Embryophyta</taxon>
        <taxon>Tracheophyta</taxon>
        <taxon>Spermatophyta</taxon>
        <taxon>Magnoliopsida</taxon>
        <taxon>eudicotyledons</taxon>
        <taxon>Gunneridae</taxon>
        <taxon>Pentapetalae</taxon>
        <taxon>rosids</taxon>
        <taxon>malvids</taxon>
        <taxon>Brassicales</taxon>
        <taxon>Brassicaceae</taxon>
        <taxon>Crucihimalayeae</taxon>
        <taxon>Crucihimalaya</taxon>
    </lineage>
</organism>
<dbReference type="EMBL" id="AP009372">
    <property type="protein sequence ID" value="BAF50273.1"/>
    <property type="molecule type" value="Genomic_DNA"/>
</dbReference>
<dbReference type="RefSeq" id="YP_001123449.1">
    <property type="nucleotide sequence ID" value="NC_009271.1"/>
</dbReference>
<dbReference type="SMR" id="A4QKR8"/>
<dbReference type="GeneID" id="4962709"/>
<dbReference type="GO" id="GO:0009535">
    <property type="term" value="C:chloroplast thylakoid membrane"/>
    <property type="evidence" value="ECO:0007669"/>
    <property type="project" value="UniProtKB-SubCell"/>
</dbReference>
<dbReference type="GO" id="GO:0045259">
    <property type="term" value="C:proton-transporting ATP synthase complex"/>
    <property type="evidence" value="ECO:0007669"/>
    <property type="project" value="UniProtKB-KW"/>
</dbReference>
<dbReference type="GO" id="GO:0033177">
    <property type="term" value="C:proton-transporting two-sector ATPase complex, proton-transporting domain"/>
    <property type="evidence" value="ECO:0007669"/>
    <property type="project" value="InterPro"/>
</dbReference>
<dbReference type="GO" id="GO:0008289">
    <property type="term" value="F:lipid binding"/>
    <property type="evidence" value="ECO:0007669"/>
    <property type="project" value="UniProtKB-KW"/>
</dbReference>
<dbReference type="GO" id="GO:0046933">
    <property type="term" value="F:proton-transporting ATP synthase activity, rotational mechanism"/>
    <property type="evidence" value="ECO:0007669"/>
    <property type="project" value="UniProtKB-UniRule"/>
</dbReference>
<dbReference type="CDD" id="cd18183">
    <property type="entry name" value="ATP-synt_Fo_c_ATPH"/>
    <property type="match status" value="1"/>
</dbReference>
<dbReference type="FunFam" id="1.20.20.10:FF:000001">
    <property type="entry name" value="ATP synthase subunit c, chloroplastic"/>
    <property type="match status" value="1"/>
</dbReference>
<dbReference type="Gene3D" id="1.20.20.10">
    <property type="entry name" value="F1F0 ATP synthase subunit C"/>
    <property type="match status" value="1"/>
</dbReference>
<dbReference type="HAMAP" id="MF_01396">
    <property type="entry name" value="ATP_synth_c_bact"/>
    <property type="match status" value="1"/>
</dbReference>
<dbReference type="InterPro" id="IPR005953">
    <property type="entry name" value="ATP_synth_csu_bac/chlpt"/>
</dbReference>
<dbReference type="InterPro" id="IPR000454">
    <property type="entry name" value="ATP_synth_F0_csu"/>
</dbReference>
<dbReference type="InterPro" id="IPR020537">
    <property type="entry name" value="ATP_synth_F0_csu_DDCD_BS"/>
</dbReference>
<dbReference type="InterPro" id="IPR038662">
    <property type="entry name" value="ATP_synth_F0_csu_sf"/>
</dbReference>
<dbReference type="InterPro" id="IPR002379">
    <property type="entry name" value="ATPase_proteolipid_c-like_dom"/>
</dbReference>
<dbReference type="InterPro" id="IPR035921">
    <property type="entry name" value="F/V-ATP_Csub_sf"/>
</dbReference>
<dbReference type="NCBIfam" id="TIGR01260">
    <property type="entry name" value="ATP_synt_c"/>
    <property type="match status" value="1"/>
</dbReference>
<dbReference type="NCBIfam" id="NF005608">
    <property type="entry name" value="PRK07354.1"/>
    <property type="match status" value="1"/>
</dbReference>
<dbReference type="PANTHER" id="PTHR10031">
    <property type="entry name" value="ATP SYNTHASE LIPID-BINDING PROTEIN, MITOCHONDRIAL"/>
    <property type="match status" value="1"/>
</dbReference>
<dbReference type="PANTHER" id="PTHR10031:SF0">
    <property type="entry name" value="ATPASE PROTEIN 9"/>
    <property type="match status" value="1"/>
</dbReference>
<dbReference type="Pfam" id="PF00137">
    <property type="entry name" value="ATP-synt_C"/>
    <property type="match status" value="1"/>
</dbReference>
<dbReference type="PRINTS" id="PR00124">
    <property type="entry name" value="ATPASEC"/>
</dbReference>
<dbReference type="SUPFAM" id="SSF81333">
    <property type="entry name" value="F1F0 ATP synthase subunit C"/>
    <property type="match status" value="1"/>
</dbReference>
<dbReference type="PROSITE" id="PS00605">
    <property type="entry name" value="ATPASE_C"/>
    <property type="match status" value="1"/>
</dbReference>
<keyword id="KW-0066">ATP synthesis</keyword>
<keyword id="KW-0138">CF(0)</keyword>
<keyword id="KW-0150">Chloroplast</keyword>
<keyword id="KW-0375">Hydrogen ion transport</keyword>
<keyword id="KW-0406">Ion transport</keyword>
<keyword id="KW-0446">Lipid-binding</keyword>
<keyword id="KW-0472">Membrane</keyword>
<keyword id="KW-0934">Plastid</keyword>
<keyword id="KW-0793">Thylakoid</keyword>
<keyword id="KW-0812">Transmembrane</keyword>
<keyword id="KW-1133">Transmembrane helix</keyword>
<keyword id="KW-0813">Transport</keyword>
<sequence>MNPLVSAASVIAAGLAVGLASIGPGVGQGTAAGQAVEGIARQPEAEGKIRGTLLLSLAFMEALTIYGLVVALALLFANPFV</sequence>
<feature type="chain" id="PRO_0000362903" description="ATP synthase subunit c, chloroplastic">
    <location>
        <begin position="1"/>
        <end position="81"/>
    </location>
</feature>
<feature type="transmembrane region" description="Helical" evidence="1">
    <location>
        <begin position="7"/>
        <end position="27"/>
    </location>
</feature>
<feature type="transmembrane region" description="Helical" evidence="1">
    <location>
        <begin position="57"/>
        <end position="77"/>
    </location>
</feature>
<feature type="site" description="Reversibly protonated during proton transport" evidence="1">
    <location>
        <position position="61"/>
    </location>
</feature>
<accession>A4QKR8</accession>
<protein>
    <recommendedName>
        <fullName evidence="1">ATP synthase subunit c, chloroplastic</fullName>
    </recommendedName>
    <alternativeName>
        <fullName evidence="1">ATP synthase F(0) sector subunit c</fullName>
    </alternativeName>
    <alternativeName>
        <fullName evidence="1">ATPase subunit III</fullName>
    </alternativeName>
    <alternativeName>
        <fullName evidence="1">F-type ATPase subunit c</fullName>
        <shortName evidence="1">F-ATPase subunit c</shortName>
    </alternativeName>
    <alternativeName>
        <fullName evidence="1">Lipid-binding protein</fullName>
    </alternativeName>
</protein>
<gene>
    <name evidence="1" type="primary">atpH</name>
</gene>
<reference key="1">
    <citation type="submission" date="2007-03" db="EMBL/GenBank/DDBJ databases">
        <title>Sequencing analysis of Crucihimalaya wallichii chloroplast DNA.</title>
        <authorList>
            <person name="Hosouchi T."/>
            <person name="Tsuruoka H."/>
            <person name="Kotani H."/>
        </authorList>
    </citation>
    <scope>NUCLEOTIDE SEQUENCE [LARGE SCALE GENOMIC DNA]</scope>
</reference>
<evidence type="ECO:0000255" key="1">
    <source>
        <dbReference type="HAMAP-Rule" id="MF_01396"/>
    </source>
</evidence>
<geneLocation type="chloroplast"/>
<comment type="function">
    <text evidence="1">F(1)F(0) ATP synthase produces ATP from ADP in the presence of a proton or sodium gradient. F-type ATPases consist of two structural domains, F(1) containing the extramembraneous catalytic core and F(0) containing the membrane proton channel, linked together by a central stalk and a peripheral stalk. During catalysis, ATP synthesis in the catalytic domain of F(1) is coupled via a rotary mechanism of the central stalk subunits to proton translocation.</text>
</comment>
<comment type="function">
    <text evidence="1">Key component of the F(0) channel; it plays a direct role in translocation across the membrane. A homomeric c-ring of between 10-14 subunits forms the central stalk rotor element with the F(1) delta and epsilon subunits.</text>
</comment>
<comment type="subunit">
    <text evidence="1">F-type ATPases have 2 components, F(1) - the catalytic core - and F(0) - the membrane proton channel. F(1) has five subunits: alpha(3), beta(3), gamma(1), delta(1), epsilon(1). F(0) has four main subunits: a(1), b(1), b'(1) and c(10-14). The alpha and beta chains form an alternating ring which encloses part of the gamma chain. F(1) is attached to F(0) by a central stalk formed by the gamma and epsilon chains, while a peripheral stalk is formed by the delta, b and b' chains.</text>
</comment>
<comment type="subcellular location">
    <subcellularLocation>
        <location evidence="1">Plastid</location>
        <location evidence="1">Chloroplast thylakoid membrane</location>
        <topology evidence="1">Multi-pass membrane protein</topology>
    </subcellularLocation>
</comment>
<comment type="miscellaneous">
    <text>In plastids the F-type ATPase is also known as CF(1)CF(0).</text>
</comment>
<comment type="similarity">
    <text evidence="1">Belongs to the ATPase C chain family.</text>
</comment>
<name>ATPH_CRUWA</name>